<comment type="function">
    <text evidence="1">Mannosylates Man(2)GlcNAc(2)-dolichol diphosphate and Man(1)GlcNAc(2)-dolichol diphosphate to form Man(3)GlcNAc(2)-dolichol diphosphate.</text>
</comment>
<comment type="catalytic activity">
    <reaction evidence="1">
        <text>a beta-D-Man-(1-&gt;4)-beta-D-GlcNAc-(1-&gt;4)-alpha-D-GlcNAc-diphospho-di-trans,poly-cis-dolichol + GDP-alpha-D-mannose = an alpha-D-Man-(1-&gt;3)-beta-D-Man-(1-&gt;4)-beta-D-GlcNAc-(1-&gt;4)-alpha-D-GlcNAc-diphospho-di-trans,poly-cis-dolichol + GDP + H(+)</text>
        <dbReference type="Rhea" id="RHEA:29515"/>
        <dbReference type="Rhea" id="RHEA-COMP:19511"/>
        <dbReference type="Rhea" id="RHEA-COMP:19513"/>
        <dbReference type="ChEBI" id="CHEBI:15378"/>
        <dbReference type="ChEBI" id="CHEBI:57527"/>
        <dbReference type="ChEBI" id="CHEBI:58189"/>
        <dbReference type="ChEBI" id="CHEBI:58472"/>
        <dbReference type="ChEBI" id="CHEBI:132510"/>
        <dbReference type="EC" id="2.4.1.132"/>
    </reaction>
    <physiologicalReaction direction="left-to-right" evidence="1">
        <dbReference type="Rhea" id="RHEA:29516"/>
    </physiologicalReaction>
</comment>
<comment type="catalytic activity">
    <reaction evidence="1">
        <text>an alpha-D-Man-(1-&gt;3)-beta-D-Man-(1-&gt;4)-beta-D-GlcNAc-(1-&gt;4)-alpha-D-GlcNAc-diphospho-di-trans,poly-cis-dolichol + GDP-alpha-D-mannose = an alpha-D-Man-(1-&gt;3)-[alpha-D-Man-(1-&gt;6)]-beta-D-Man-(1-&gt;4)-beta-D-GlcNAc-(1-&gt;4)-alpha-D-GlcNAc-diphospho-di-trans,poly-cis-dolichol + GDP + H(+)</text>
        <dbReference type="Rhea" id="RHEA:29519"/>
        <dbReference type="Rhea" id="RHEA-COMP:19513"/>
        <dbReference type="Rhea" id="RHEA-COMP:19515"/>
        <dbReference type="ChEBI" id="CHEBI:15378"/>
        <dbReference type="ChEBI" id="CHEBI:57527"/>
        <dbReference type="ChEBI" id="CHEBI:58189"/>
        <dbReference type="ChEBI" id="CHEBI:132510"/>
        <dbReference type="ChEBI" id="CHEBI:132511"/>
        <dbReference type="EC" id="2.4.1.257"/>
    </reaction>
    <physiologicalReaction direction="left-to-right" evidence="1">
        <dbReference type="Rhea" id="RHEA:29520"/>
    </physiologicalReaction>
</comment>
<comment type="pathway">
    <text evidence="1">Protein modification; protein glycosylation.</text>
</comment>
<comment type="subcellular location">
    <subcellularLocation>
        <location evidence="1">Endoplasmic reticulum membrane</location>
        <topology evidence="2">Multi-pass membrane protein</topology>
    </subcellularLocation>
</comment>
<comment type="similarity">
    <text evidence="3">Belongs to the glycosyltransferase group 1 family.</text>
</comment>
<reference key="1">
    <citation type="journal article" date="2004" name="Science">
        <title>The Ashbya gossypii genome as a tool for mapping the ancient Saccharomyces cerevisiae genome.</title>
        <authorList>
            <person name="Dietrich F.S."/>
            <person name="Voegeli S."/>
            <person name="Brachat S."/>
            <person name="Lerch A."/>
            <person name="Gates K."/>
            <person name="Steiner S."/>
            <person name="Mohr C."/>
            <person name="Poehlmann R."/>
            <person name="Luedi P."/>
            <person name="Choi S."/>
            <person name="Wing R.A."/>
            <person name="Flavier A."/>
            <person name="Gaffney T.D."/>
            <person name="Philippsen P."/>
        </authorList>
    </citation>
    <scope>NUCLEOTIDE SEQUENCE [LARGE SCALE GENOMIC DNA]</scope>
    <source>
        <strain>ATCC 10895 / CBS 109.51 / FGSC 9923 / NRRL Y-1056</strain>
    </source>
</reference>
<reference key="2">
    <citation type="journal article" date="2013" name="G3 (Bethesda)">
        <title>Genomes of Ashbya fungi isolated from insects reveal four mating-type loci, numerous translocations, lack of transposons, and distinct gene duplications.</title>
        <authorList>
            <person name="Dietrich F.S."/>
            <person name="Voegeli S."/>
            <person name="Kuo S."/>
            <person name="Philippsen P."/>
        </authorList>
    </citation>
    <scope>GENOME REANNOTATION</scope>
    <source>
        <strain>ATCC 10895 / CBS 109.51 / FGSC 9923 / NRRL Y-1056</strain>
    </source>
</reference>
<evidence type="ECO:0000250" key="1">
    <source>
        <dbReference type="UniProtKB" id="P43636"/>
    </source>
</evidence>
<evidence type="ECO:0000255" key="2"/>
<evidence type="ECO:0000305" key="3"/>
<sequence>MMTPLNIALIHPDLGIGGAERLVVDAAIGLQDQGHRVTIYTSHCDKNHCFEEIKRGDLKVVVVGDFLPTNILGKFFILCANLRQLALVFKLVINGSIDKHDLFIVDQLSTCVPLLHLFSASGRVLFYCHFPDQLLAQRKSLVSKLYRVPFDLLEQLTMGCSDSVVVNSYFTRSVFFDTFKILRLNPRVVYPCVAMDELPIEKIDIGFYDQIIGPNNRYYLSINRFERKKDIALALNAFKASKEGHSSDTKLIICGGYDSRVAENVEYLSELQLICEKANIAHVTIFYSEFSRTPEHYTFPTGVREKKVIFLASISSSLKELLLKKAQLLLYTPSREHFGIVPLEAMKHGTPVLAVDNGGPLETVVTLKSDNQDTATGWLRRADAGIWAEAIDEQAEYVKKNPGIFATNGPKWVKDKFSRDAMTSSFLHNIDNIFMTDRVIQPWAVMVILAASYILWRSSHVFGDACRYIYLLTGGILVLRSRYLLAIFWVLLFVMQPQLSVGVDTITATLKPKL</sequence>
<accession>Q755C1</accession>
<protein>
    <recommendedName>
        <fullName>Alpha-1,3/1,6-mannosyltransferase ALG2</fullName>
        <ecNumber evidence="1">2.4.1.132</ecNumber>
        <ecNumber evidence="1">2.4.1.257</ecNumber>
    </recommendedName>
    <alternativeName>
        <fullName>Asparagine-linked glycosylation protein 2</fullName>
    </alternativeName>
    <alternativeName>
        <fullName>GDP-Man:Man(1)GlcNAc(2)-PP-Dol alpha-1,3-mannosyltransferase</fullName>
    </alternativeName>
    <alternativeName>
        <fullName>GDP-Man:Man(1)GlcNAc(2)-PP-dolichol mannosyltransferase</fullName>
    </alternativeName>
    <alternativeName>
        <fullName>GDP-Man:Man(2)GlcNAc(2)-PP-Dol alpha-1,6-mannosyltransferase</fullName>
    </alternativeName>
</protein>
<name>ALG2_EREGS</name>
<keyword id="KW-0256">Endoplasmic reticulum</keyword>
<keyword id="KW-0325">Glycoprotein</keyword>
<keyword id="KW-0328">Glycosyltransferase</keyword>
<keyword id="KW-0472">Membrane</keyword>
<keyword id="KW-1185">Reference proteome</keyword>
<keyword id="KW-0808">Transferase</keyword>
<keyword id="KW-0812">Transmembrane</keyword>
<keyword id="KW-1133">Transmembrane helix</keyword>
<feature type="chain" id="PRO_0000080262" description="Alpha-1,3/1,6-mannosyltransferase ALG2">
    <location>
        <begin position="1"/>
        <end position="514"/>
    </location>
</feature>
<feature type="transmembrane region" description="Helical" evidence="2">
    <location>
        <begin position="443"/>
        <end position="463"/>
    </location>
</feature>
<feature type="transmembrane region" description="Helical" evidence="2">
    <location>
        <begin position="468"/>
        <end position="490"/>
    </location>
</feature>
<feature type="glycosylation site" description="N-linked (GlcNAc...) asparagine" evidence="2">
    <location>
        <position position="94"/>
    </location>
</feature>
<organism>
    <name type="scientific">Eremothecium gossypii (strain ATCC 10895 / CBS 109.51 / FGSC 9923 / NRRL Y-1056)</name>
    <name type="common">Yeast</name>
    <name type="synonym">Ashbya gossypii</name>
    <dbReference type="NCBI Taxonomy" id="284811"/>
    <lineage>
        <taxon>Eukaryota</taxon>
        <taxon>Fungi</taxon>
        <taxon>Dikarya</taxon>
        <taxon>Ascomycota</taxon>
        <taxon>Saccharomycotina</taxon>
        <taxon>Saccharomycetes</taxon>
        <taxon>Saccharomycetales</taxon>
        <taxon>Saccharomycetaceae</taxon>
        <taxon>Eremothecium</taxon>
    </lineage>
</organism>
<proteinExistence type="inferred from homology"/>
<gene>
    <name type="primary">ALG2</name>
    <name type="ordered locus">AFL098W</name>
</gene>
<dbReference type="EC" id="2.4.1.132" evidence="1"/>
<dbReference type="EC" id="2.4.1.257" evidence="1"/>
<dbReference type="EMBL" id="AE016819">
    <property type="protein sequence ID" value="AAS53276.1"/>
    <property type="molecule type" value="Genomic_DNA"/>
</dbReference>
<dbReference type="RefSeq" id="NP_985452.1">
    <property type="nucleotide sequence ID" value="NM_210806.1"/>
</dbReference>
<dbReference type="SMR" id="Q755C1"/>
<dbReference type="FunCoup" id="Q755C1">
    <property type="interactions" value="743"/>
</dbReference>
<dbReference type="STRING" id="284811.Q755C1"/>
<dbReference type="CAZy" id="GT4">
    <property type="family name" value="Glycosyltransferase Family 4"/>
</dbReference>
<dbReference type="GlyCosmos" id="Q755C1">
    <property type="glycosylation" value="1 site, No reported glycans"/>
</dbReference>
<dbReference type="EnsemblFungi" id="AAS53276">
    <property type="protein sequence ID" value="AAS53276"/>
    <property type="gene ID" value="AGOS_AFL098W"/>
</dbReference>
<dbReference type="GeneID" id="4621679"/>
<dbReference type="KEGG" id="ago:AGOS_AFL098W"/>
<dbReference type="eggNOG" id="KOG0853">
    <property type="taxonomic scope" value="Eukaryota"/>
</dbReference>
<dbReference type="HOGENOM" id="CLU_030619_1_0_1"/>
<dbReference type="InParanoid" id="Q755C1"/>
<dbReference type="OMA" id="AMYMKCP"/>
<dbReference type="OrthoDB" id="448893at2759"/>
<dbReference type="UniPathway" id="UPA00378"/>
<dbReference type="Proteomes" id="UP000000591">
    <property type="component" value="Chromosome VI"/>
</dbReference>
<dbReference type="GO" id="GO:0012505">
    <property type="term" value="C:endomembrane system"/>
    <property type="evidence" value="ECO:0000318"/>
    <property type="project" value="GO_Central"/>
</dbReference>
<dbReference type="GO" id="GO:0005789">
    <property type="term" value="C:endoplasmic reticulum membrane"/>
    <property type="evidence" value="ECO:0007669"/>
    <property type="project" value="UniProtKB-SubCell"/>
</dbReference>
<dbReference type="GO" id="GO:0000033">
    <property type="term" value="F:alpha-1,3-mannosyltransferase activity"/>
    <property type="evidence" value="ECO:0000318"/>
    <property type="project" value="GO_Central"/>
</dbReference>
<dbReference type="GO" id="GO:0004378">
    <property type="term" value="F:GDP-Man:Man1GlcNAc2-PP-Dol alpha-1,3-mannosyltransferase activity"/>
    <property type="evidence" value="ECO:0007669"/>
    <property type="project" value="UniProtKB-EC"/>
</dbReference>
<dbReference type="GO" id="GO:0102704">
    <property type="term" value="F:GDP-Man:Man2GlcNAc2-PP-dolichol alpha-1,6-mannosyltransferase activity"/>
    <property type="evidence" value="ECO:0007669"/>
    <property type="project" value="UniProtKB-EC"/>
</dbReference>
<dbReference type="GO" id="GO:0006488">
    <property type="term" value="P:dolichol-linked oligosaccharide biosynthetic process"/>
    <property type="evidence" value="ECO:0000318"/>
    <property type="project" value="GO_Central"/>
</dbReference>
<dbReference type="CDD" id="cd03805">
    <property type="entry name" value="GT4_ALG2-like"/>
    <property type="match status" value="1"/>
</dbReference>
<dbReference type="FunFam" id="3.40.50.2000:FF:000222">
    <property type="entry name" value="Alpha-1,3-mannosyltransferase ALG2"/>
    <property type="match status" value="1"/>
</dbReference>
<dbReference type="Gene3D" id="3.40.50.2000">
    <property type="entry name" value="Glycogen Phosphorylase B"/>
    <property type="match status" value="2"/>
</dbReference>
<dbReference type="InterPro" id="IPR027054">
    <property type="entry name" value="ALG2"/>
</dbReference>
<dbReference type="InterPro" id="IPR001296">
    <property type="entry name" value="Glyco_trans_1"/>
</dbReference>
<dbReference type="InterPro" id="IPR028098">
    <property type="entry name" value="Glyco_trans_4-like_N"/>
</dbReference>
<dbReference type="PANTHER" id="PTHR45918">
    <property type="entry name" value="ALPHA-1,3/1,6-MANNOSYLTRANSFERASE ALG2"/>
    <property type="match status" value="1"/>
</dbReference>
<dbReference type="PANTHER" id="PTHR45918:SF1">
    <property type="entry name" value="ALPHA-1,3_1,6-MANNOSYLTRANSFERASE ALG2"/>
    <property type="match status" value="1"/>
</dbReference>
<dbReference type="Pfam" id="PF13439">
    <property type="entry name" value="Glyco_transf_4"/>
    <property type="match status" value="1"/>
</dbReference>
<dbReference type="Pfam" id="PF00534">
    <property type="entry name" value="Glycos_transf_1"/>
    <property type="match status" value="2"/>
</dbReference>
<dbReference type="SUPFAM" id="SSF53756">
    <property type="entry name" value="UDP-Glycosyltransferase/glycogen phosphorylase"/>
    <property type="match status" value="1"/>
</dbReference>